<feature type="chain" id="PRO_1000060385" description="Ubiquinone biosynthesis O-methyltransferase">
    <location>
        <begin position="1"/>
        <end position="240"/>
    </location>
</feature>
<feature type="binding site" evidence="1">
    <location>
        <position position="44"/>
    </location>
    <ligand>
        <name>S-adenosyl-L-methionine</name>
        <dbReference type="ChEBI" id="CHEBI:59789"/>
    </ligand>
</feature>
<feature type="binding site" evidence="1">
    <location>
        <position position="64"/>
    </location>
    <ligand>
        <name>S-adenosyl-L-methionine</name>
        <dbReference type="ChEBI" id="CHEBI:59789"/>
    </ligand>
</feature>
<feature type="binding site" evidence="1">
    <location>
        <position position="85"/>
    </location>
    <ligand>
        <name>S-adenosyl-L-methionine</name>
        <dbReference type="ChEBI" id="CHEBI:59789"/>
    </ligand>
</feature>
<feature type="binding site" evidence="1">
    <location>
        <position position="129"/>
    </location>
    <ligand>
        <name>S-adenosyl-L-methionine</name>
        <dbReference type="ChEBI" id="CHEBI:59789"/>
    </ligand>
</feature>
<keyword id="KW-0489">Methyltransferase</keyword>
<keyword id="KW-1185">Reference proteome</keyword>
<keyword id="KW-0949">S-adenosyl-L-methionine</keyword>
<keyword id="KW-0808">Transferase</keyword>
<keyword id="KW-0831">Ubiquinone biosynthesis</keyword>
<protein>
    <recommendedName>
        <fullName evidence="1">Ubiquinone biosynthesis O-methyltransferase</fullName>
    </recommendedName>
    <alternativeName>
        <fullName evidence="1">2-octaprenyl-6-hydroxyphenol methylase</fullName>
        <ecNumber evidence="1">2.1.1.222</ecNumber>
    </alternativeName>
    <alternativeName>
        <fullName evidence="1">3-demethylubiquinone-8 3-O-methyltransferase</fullName>
        <ecNumber evidence="1">2.1.1.64</ecNumber>
    </alternativeName>
</protein>
<name>UBIG_ECO24</name>
<sequence>MNAEKSPVNHNVDHEEIAKFEAVASRWWDLEGEFKPLHRINPLRLGYIAERAGGLFGKKVLDVGCGGGILAESMAREGATVTGLDMGFEPLQVAKLHALESGIQVDYVQETVEEHAAKHAGQYDVVTCMEMLEHVPDPQSVVRACAQLVKPGGDVFFSTLNRNGKSWLMAVVGAEYILRMVPKGTHDVKKFIKPAELLGWVDQTSLKERHITGLHYNPITNTFKLGPGVDVNYMLHTQNK</sequence>
<organism>
    <name type="scientific">Escherichia coli O139:H28 (strain E24377A / ETEC)</name>
    <dbReference type="NCBI Taxonomy" id="331111"/>
    <lineage>
        <taxon>Bacteria</taxon>
        <taxon>Pseudomonadati</taxon>
        <taxon>Pseudomonadota</taxon>
        <taxon>Gammaproteobacteria</taxon>
        <taxon>Enterobacterales</taxon>
        <taxon>Enterobacteriaceae</taxon>
        <taxon>Escherichia</taxon>
    </lineage>
</organism>
<comment type="function">
    <text evidence="1">O-methyltransferase that catalyzes the 2 O-methylation steps in the ubiquinone biosynthetic pathway.</text>
</comment>
<comment type="catalytic activity">
    <reaction evidence="1">
        <text>a 3-demethylubiquinol + S-adenosyl-L-methionine = a ubiquinol + S-adenosyl-L-homocysteine + H(+)</text>
        <dbReference type="Rhea" id="RHEA:44380"/>
        <dbReference type="Rhea" id="RHEA-COMP:9566"/>
        <dbReference type="Rhea" id="RHEA-COMP:10914"/>
        <dbReference type="ChEBI" id="CHEBI:15378"/>
        <dbReference type="ChEBI" id="CHEBI:17976"/>
        <dbReference type="ChEBI" id="CHEBI:57856"/>
        <dbReference type="ChEBI" id="CHEBI:59789"/>
        <dbReference type="ChEBI" id="CHEBI:84422"/>
        <dbReference type="EC" id="2.1.1.64"/>
    </reaction>
</comment>
<comment type="catalytic activity">
    <reaction evidence="1">
        <text>a 3-(all-trans-polyprenyl)benzene-1,2-diol + S-adenosyl-L-methionine = a 2-methoxy-6-(all-trans-polyprenyl)phenol + S-adenosyl-L-homocysteine + H(+)</text>
        <dbReference type="Rhea" id="RHEA:31411"/>
        <dbReference type="Rhea" id="RHEA-COMP:9550"/>
        <dbReference type="Rhea" id="RHEA-COMP:9551"/>
        <dbReference type="ChEBI" id="CHEBI:15378"/>
        <dbReference type="ChEBI" id="CHEBI:57856"/>
        <dbReference type="ChEBI" id="CHEBI:59789"/>
        <dbReference type="ChEBI" id="CHEBI:62729"/>
        <dbReference type="ChEBI" id="CHEBI:62731"/>
        <dbReference type="EC" id="2.1.1.222"/>
    </reaction>
</comment>
<comment type="pathway">
    <text evidence="1">Cofactor biosynthesis; ubiquinone biosynthesis.</text>
</comment>
<comment type="similarity">
    <text evidence="1">Belongs to the methyltransferase superfamily. UbiG/COQ3 family.</text>
</comment>
<evidence type="ECO:0000255" key="1">
    <source>
        <dbReference type="HAMAP-Rule" id="MF_00472"/>
    </source>
</evidence>
<reference key="1">
    <citation type="journal article" date="2008" name="J. Bacteriol.">
        <title>The pangenome structure of Escherichia coli: comparative genomic analysis of E. coli commensal and pathogenic isolates.</title>
        <authorList>
            <person name="Rasko D.A."/>
            <person name="Rosovitz M.J."/>
            <person name="Myers G.S.A."/>
            <person name="Mongodin E.F."/>
            <person name="Fricke W.F."/>
            <person name="Gajer P."/>
            <person name="Crabtree J."/>
            <person name="Sebaihia M."/>
            <person name="Thomson N.R."/>
            <person name="Chaudhuri R."/>
            <person name="Henderson I.R."/>
            <person name="Sperandio V."/>
            <person name="Ravel J."/>
        </authorList>
    </citation>
    <scope>NUCLEOTIDE SEQUENCE [LARGE SCALE GENOMIC DNA]</scope>
    <source>
        <strain>E24377A / ETEC</strain>
    </source>
</reference>
<accession>A7ZP50</accession>
<dbReference type="EC" id="2.1.1.222" evidence="1"/>
<dbReference type="EC" id="2.1.1.64" evidence="1"/>
<dbReference type="EMBL" id="CP000800">
    <property type="protein sequence ID" value="ABV16577.1"/>
    <property type="molecule type" value="Genomic_DNA"/>
</dbReference>
<dbReference type="RefSeq" id="WP_000990765.1">
    <property type="nucleotide sequence ID" value="NC_009801.1"/>
</dbReference>
<dbReference type="SMR" id="A7ZP50"/>
<dbReference type="GeneID" id="75206477"/>
<dbReference type="KEGG" id="ecw:EcE24377A_2527"/>
<dbReference type="HOGENOM" id="CLU_042432_5_0_6"/>
<dbReference type="UniPathway" id="UPA00232"/>
<dbReference type="Proteomes" id="UP000001122">
    <property type="component" value="Chromosome"/>
</dbReference>
<dbReference type="GO" id="GO:0102208">
    <property type="term" value="F:2-polyprenyl-6-hydroxyphenol methylase activity"/>
    <property type="evidence" value="ECO:0007669"/>
    <property type="project" value="UniProtKB-EC"/>
</dbReference>
<dbReference type="GO" id="GO:0061542">
    <property type="term" value="F:3-demethylubiquinol 3-O-methyltransferase activity"/>
    <property type="evidence" value="ECO:0007669"/>
    <property type="project" value="UniProtKB-UniRule"/>
</dbReference>
<dbReference type="GO" id="GO:0010420">
    <property type="term" value="F:polyprenyldihydroxybenzoate methyltransferase activity"/>
    <property type="evidence" value="ECO:0007669"/>
    <property type="project" value="InterPro"/>
</dbReference>
<dbReference type="GO" id="GO:0032259">
    <property type="term" value="P:methylation"/>
    <property type="evidence" value="ECO:0007669"/>
    <property type="project" value="UniProtKB-KW"/>
</dbReference>
<dbReference type="CDD" id="cd02440">
    <property type="entry name" value="AdoMet_MTases"/>
    <property type="match status" value="1"/>
</dbReference>
<dbReference type="FunFam" id="3.40.50.150:FF:000028">
    <property type="entry name" value="Ubiquinone biosynthesis O-methyltransferase"/>
    <property type="match status" value="1"/>
</dbReference>
<dbReference type="Gene3D" id="3.40.50.150">
    <property type="entry name" value="Vaccinia Virus protein VP39"/>
    <property type="match status" value="1"/>
</dbReference>
<dbReference type="HAMAP" id="MF_00472">
    <property type="entry name" value="UbiG"/>
    <property type="match status" value="1"/>
</dbReference>
<dbReference type="InterPro" id="IPR029063">
    <property type="entry name" value="SAM-dependent_MTases_sf"/>
</dbReference>
<dbReference type="InterPro" id="IPR010233">
    <property type="entry name" value="UbiG_MeTrfase"/>
</dbReference>
<dbReference type="NCBIfam" id="TIGR01983">
    <property type="entry name" value="UbiG"/>
    <property type="match status" value="1"/>
</dbReference>
<dbReference type="PANTHER" id="PTHR43464">
    <property type="entry name" value="METHYLTRANSFERASE"/>
    <property type="match status" value="1"/>
</dbReference>
<dbReference type="PANTHER" id="PTHR43464:SF19">
    <property type="entry name" value="UBIQUINONE BIOSYNTHESIS O-METHYLTRANSFERASE, MITOCHONDRIAL"/>
    <property type="match status" value="1"/>
</dbReference>
<dbReference type="Pfam" id="PF13489">
    <property type="entry name" value="Methyltransf_23"/>
    <property type="match status" value="1"/>
</dbReference>
<dbReference type="SUPFAM" id="SSF53335">
    <property type="entry name" value="S-adenosyl-L-methionine-dependent methyltransferases"/>
    <property type="match status" value="1"/>
</dbReference>
<gene>
    <name evidence="1" type="primary">ubiG</name>
    <name type="ordered locus">EcE24377A_2527</name>
</gene>
<proteinExistence type="inferred from homology"/>